<accession>Q1GT89</accession>
<keyword id="KW-0963">Cytoplasm</keyword>
<keyword id="KW-0444">Lipid biosynthesis</keyword>
<keyword id="KW-0443">Lipid metabolism</keyword>
<keyword id="KW-0594">Phospholipid biosynthesis</keyword>
<keyword id="KW-1208">Phospholipid metabolism</keyword>
<keyword id="KW-1185">Reference proteome</keyword>
<keyword id="KW-0808">Transferase</keyword>
<sequence>MALTPRIAIDAMGGDVGVRVMLAGAAMARHKHDGLRFILVGDEERIKAALDNHPNLRAASDIIHTDGVVSGEDKPSQALRKAKSTSMGLAIDAVKRGDAGGAVSAGNTGALMAMAKLALRTMPGIDRPALAALLPTLGDNDVVMLDLGANTECDATNLTQFAVMGAAYARTAMGLERPRVALLNIGTEELKGTDEIRDAAALLRGAEGLPMQFAGFIEGDKLSRGDVDVIVHDGFSGNIALKTIEGTARFVTDLLRRAFTSSTRSKIGFLISRPATELLRHHLDPNNHNGAVFLGLNGVVLKSHGSADAKGVANCVHLCAELIEKDITRQVTEDLANFRRGDAA</sequence>
<feature type="chain" id="PRO_1000057178" description="Phosphate acyltransferase">
    <location>
        <begin position="1"/>
        <end position="344"/>
    </location>
</feature>
<protein>
    <recommendedName>
        <fullName evidence="1">Phosphate acyltransferase</fullName>
        <ecNumber evidence="1">2.3.1.274</ecNumber>
    </recommendedName>
    <alternativeName>
        <fullName evidence="1">Acyl-ACP phosphotransacylase</fullName>
    </alternativeName>
    <alternativeName>
        <fullName evidence="1">Acyl-[acyl-carrier-protein]--phosphate acyltransferase</fullName>
    </alternativeName>
    <alternativeName>
        <fullName evidence="1">Phosphate-acyl-ACP acyltransferase</fullName>
    </alternativeName>
</protein>
<name>PLSX_SPHAL</name>
<organism>
    <name type="scientific">Sphingopyxis alaskensis (strain DSM 13593 / LMG 18877 / RB2256)</name>
    <name type="common">Sphingomonas alaskensis</name>
    <dbReference type="NCBI Taxonomy" id="317655"/>
    <lineage>
        <taxon>Bacteria</taxon>
        <taxon>Pseudomonadati</taxon>
        <taxon>Pseudomonadota</taxon>
        <taxon>Alphaproteobacteria</taxon>
        <taxon>Sphingomonadales</taxon>
        <taxon>Sphingomonadaceae</taxon>
        <taxon>Sphingopyxis</taxon>
    </lineage>
</organism>
<comment type="function">
    <text evidence="1">Catalyzes the reversible formation of acyl-phosphate (acyl-PO(4)) from acyl-[acyl-carrier-protein] (acyl-ACP). This enzyme utilizes acyl-ACP as fatty acyl donor, but not acyl-CoA.</text>
</comment>
<comment type="catalytic activity">
    <reaction evidence="1">
        <text>a fatty acyl-[ACP] + phosphate = an acyl phosphate + holo-[ACP]</text>
        <dbReference type="Rhea" id="RHEA:42292"/>
        <dbReference type="Rhea" id="RHEA-COMP:9685"/>
        <dbReference type="Rhea" id="RHEA-COMP:14125"/>
        <dbReference type="ChEBI" id="CHEBI:43474"/>
        <dbReference type="ChEBI" id="CHEBI:59918"/>
        <dbReference type="ChEBI" id="CHEBI:64479"/>
        <dbReference type="ChEBI" id="CHEBI:138651"/>
        <dbReference type="EC" id="2.3.1.274"/>
    </reaction>
</comment>
<comment type="pathway">
    <text evidence="1">Lipid metabolism; phospholipid metabolism.</text>
</comment>
<comment type="subunit">
    <text evidence="1">Homodimer. Probably interacts with PlsY.</text>
</comment>
<comment type="subcellular location">
    <subcellularLocation>
        <location evidence="1">Cytoplasm</location>
    </subcellularLocation>
    <text evidence="1">Associated with the membrane possibly through PlsY.</text>
</comment>
<comment type="similarity">
    <text evidence="1">Belongs to the PlsX family.</text>
</comment>
<proteinExistence type="inferred from homology"/>
<reference key="1">
    <citation type="journal article" date="2009" name="Proc. Natl. Acad. Sci. U.S.A.">
        <title>The genomic basis of trophic strategy in marine bacteria.</title>
        <authorList>
            <person name="Lauro F.M."/>
            <person name="McDougald D."/>
            <person name="Thomas T."/>
            <person name="Williams T.J."/>
            <person name="Egan S."/>
            <person name="Rice S."/>
            <person name="DeMaere M.Z."/>
            <person name="Ting L."/>
            <person name="Ertan H."/>
            <person name="Johnson J."/>
            <person name="Ferriera S."/>
            <person name="Lapidus A."/>
            <person name="Anderson I."/>
            <person name="Kyrpides N."/>
            <person name="Munk A.C."/>
            <person name="Detter C."/>
            <person name="Han C.S."/>
            <person name="Brown M.V."/>
            <person name="Robb F.T."/>
            <person name="Kjelleberg S."/>
            <person name="Cavicchioli R."/>
        </authorList>
    </citation>
    <scope>NUCLEOTIDE SEQUENCE [LARGE SCALE GENOMIC DNA]</scope>
    <source>
        <strain>DSM 13593 / LMG 18877 / RB2256</strain>
    </source>
</reference>
<gene>
    <name evidence="1" type="primary">plsX</name>
    <name type="ordered locus">Sala_1419</name>
</gene>
<evidence type="ECO:0000255" key="1">
    <source>
        <dbReference type="HAMAP-Rule" id="MF_00019"/>
    </source>
</evidence>
<dbReference type="EC" id="2.3.1.274" evidence="1"/>
<dbReference type="EMBL" id="CP000356">
    <property type="protein sequence ID" value="ABF53133.1"/>
    <property type="molecule type" value="Genomic_DNA"/>
</dbReference>
<dbReference type="RefSeq" id="WP_011541713.1">
    <property type="nucleotide sequence ID" value="NC_008048.1"/>
</dbReference>
<dbReference type="SMR" id="Q1GT89"/>
<dbReference type="STRING" id="317655.Sala_1419"/>
<dbReference type="KEGG" id="sal:Sala_1419"/>
<dbReference type="eggNOG" id="COG0416">
    <property type="taxonomic scope" value="Bacteria"/>
</dbReference>
<dbReference type="HOGENOM" id="CLU_039379_1_0_5"/>
<dbReference type="OrthoDB" id="9806408at2"/>
<dbReference type="UniPathway" id="UPA00085"/>
<dbReference type="Proteomes" id="UP000006578">
    <property type="component" value="Chromosome"/>
</dbReference>
<dbReference type="GO" id="GO:0005737">
    <property type="term" value="C:cytoplasm"/>
    <property type="evidence" value="ECO:0007669"/>
    <property type="project" value="UniProtKB-SubCell"/>
</dbReference>
<dbReference type="GO" id="GO:0043811">
    <property type="term" value="F:phosphate:acyl-[acyl carrier protein] acyltransferase activity"/>
    <property type="evidence" value="ECO:0007669"/>
    <property type="project" value="UniProtKB-UniRule"/>
</dbReference>
<dbReference type="GO" id="GO:0006633">
    <property type="term" value="P:fatty acid biosynthetic process"/>
    <property type="evidence" value="ECO:0007669"/>
    <property type="project" value="UniProtKB-UniRule"/>
</dbReference>
<dbReference type="GO" id="GO:0008654">
    <property type="term" value="P:phospholipid biosynthetic process"/>
    <property type="evidence" value="ECO:0007669"/>
    <property type="project" value="UniProtKB-KW"/>
</dbReference>
<dbReference type="Gene3D" id="3.40.718.10">
    <property type="entry name" value="Isopropylmalate Dehydrogenase"/>
    <property type="match status" value="1"/>
</dbReference>
<dbReference type="HAMAP" id="MF_00019">
    <property type="entry name" value="PlsX"/>
    <property type="match status" value="1"/>
</dbReference>
<dbReference type="InterPro" id="IPR003664">
    <property type="entry name" value="FA_synthesis"/>
</dbReference>
<dbReference type="InterPro" id="IPR012281">
    <property type="entry name" value="Phospholipid_synth_PlsX-like"/>
</dbReference>
<dbReference type="NCBIfam" id="TIGR00182">
    <property type="entry name" value="plsX"/>
    <property type="match status" value="1"/>
</dbReference>
<dbReference type="PANTHER" id="PTHR30100">
    <property type="entry name" value="FATTY ACID/PHOSPHOLIPID SYNTHESIS PROTEIN PLSX"/>
    <property type="match status" value="1"/>
</dbReference>
<dbReference type="PANTHER" id="PTHR30100:SF1">
    <property type="entry name" value="PHOSPHATE ACYLTRANSFERASE"/>
    <property type="match status" value="1"/>
</dbReference>
<dbReference type="Pfam" id="PF02504">
    <property type="entry name" value="FA_synthesis"/>
    <property type="match status" value="1"/>
</dbReference>
<dbReference type="PIRSF" id="PIRSF002465">
    <property type="entry name" value="Phsphlp_syn_PlsX"/>
    <property type="match status" value="1"/>
</dbReference>
<dbReference type="SUPFAM" id="SSF53659">
    <property type="entry name" value="Isocitrate/Isopropylmalate dehydrogenase-like"/>
    <property type="match status" value="1"/>
</dbReference>